<keyword id="KW-0324">Glycolysis</keyword>
<keyword id="KW-0413">Isomerase</keyword>
<keyword id="KW-0464">Manganese</keyword>
<keyword id="KW-0479">Metal-binding</keyword>
<keyword id="KW-1185">Reference proteome</keyword>
<reference key="1">
    <citation type="journal article" date="2010" name="ISME J.">
        <title>The complete genome sequence of the algal symbiont Dinoroseobacter shibae: a hitchhiker's guide to life in the sea.</title>
        <authorList>
            <person name="Wagner-Dobler I."/>
            <person name="Ballhausen B."/>
            <person name="Berger M."/>
            <person name="Brinkhoff T."/>
            <person name="Buchholz I."/>
            <person name="Bunk B."/>
            <person name="Cypionka H."/>
            <person name="Daniel R."/>
            <person name="Drepper T."/>
            <person name="Gerdts G."/>
            <person name="Hahnke S."/>
            <person name="Han C."/>
            <person name="Jahn D."/>
            <person name="Kalhoefer D."/>
            <person name="Kiss H."/>
            <person name="Klenk H.P."/>
            <person name="Kyrpides N."/>
            <person name="Liebl W."/>
            <person name="Liesegang H."/>
            <person name="Meincke L."/>
            <person name="Pati A."/>
            <person name="Petersen J."/>
            <person name="Piekarski T."/>
            <person name="Pommerenke C."/>
            <person name="Pradella S."/>
            <person name="Pukall R."/>
            <person name="Rabus R."/>
            <person name="Stackebrandt E."/>
            <person name="Thole S."/>
            <person name="Thompson L."/>
            <person name="Tielen P."/>
            <person name="Tomasch J."/>
            <person name="von Jan M."/>
            <person name="Wanphrut N."/>
            <person name="Wichels A."/>
            <person name="Zech H."/>
            <person name="Simon M."/>
        </authorList>
    </citation>
    <scope>NUCLEOTIDE SEQUENCE [LARGE SCALE GENOMIC DNA]</scope>
    <source>
        <strain>DSM 16493 / NCIMB 14021 / DFL 12</strain>
    </source>
</reference>
<organism>
    <name type="scientific">Dinoroseobacter shibae (strain DSM 16493 / NCIMB 14021 / DFL 12)</name>
    <dbReference type="NCBI Taxonomy" id="398580"/>
    <lineage>
        <taxon>Bacteria</taxon>
        <taxon>Pseudomonadati</taxon>
        <taxon>Pseudomonadota</taxon>
        <taxon>Alphaproteobacteria</taxon>
        <taxon>Rhodobacterales</taxon>
        <taxon>Roseobacteraceae</taxon>
        <taxon>Dinoroseobacter</taxon>
    </lineage>
</organism>
<evidence type="ECO:0000255" key="1">
    <source>
        <dbReference type="HAMAP-Rule" id="MF_01038"/>
    </source>
</evidence>
<proteinExistence type="inferred from homology"/>
<dbReference type="EC" id="5.4.2.12" evidence="1"/>
<dbReference type="EMBL" id="CP000830">
    <property type="protein sequence ID" value="ABV91838.1"/>
    <property type="molecule type" value="Genomic_DNA"/>
</dbReference>
<dbReference type="RefSeq" id="WP_012176771.1">
    <property type="nucleotide sequence ID" value="NC_009952.1"/>
</dbReference>
<dbReference type="SMR" id="A8LKJ5"/>
<dbReference type="STRING" id="398580.Dshi_0089"/>
<dbReference type="KEGG" id="dsh:Dshi_0089"/>
<dbReference type="eggNOG" id="COG0696">
    <property type="taxonomic scope" value="Bacteria"/>
</dbReference>
<dbReference type="HOGENOM" id="CLU_026099_2_0_5"/>
<dbReference type="OrthoDB" id="9800863at2"/>
<dbReference type="UniPathway" id="UPA00109">
    <property type="reaction ID" value="UER00186"/>
</dbReference>
<dbReference type="Proteomes" id="UP000006833">
    <property type="component" value="Chromosome"/>
</dbReference>
<dbReference type="GO" id="GO:0005829">
    <property type="term" value="C:cytosol"/>
    <property type="evidence" value="ECO:0007669"/>
    <property type="project" value="TreeGrafter"/>
</dbReference>
<dbReference type="GO" id="GO:0030145">
    <property type="term" value="F:manganese ion binding"/>
    <property type="evidence" value="ECO:0007669"/>
    <property type="project" value="UniProtKB-UniRule"/>
</dbReference>
<dbReference type="GO" id="GO:0004619">
    <property type="term" value="F:phosphoglycerate mutase activity"/>
    <property type="evidence" value="ECO:0007669"/>
    <property type="project" value="UniProtKB-EC"/>
</dbReference>
<dbReference type="GO" id="GO:0006007">
    <property type="term" value="P:glucose catabolic process"/>
    <property type="evidence" value="ECO:0007669"/>
    <property type="project" value="InterPro"/>
</dbReference>
<dbReference type="GO" id="GO:0006096">
    <property type="term" value="P:glycolytic process"/>
    <property type="evidence" value="ECO:0007669"/>
    <property type="project" value="UniProtKB-UniRule"/>
</dbReference>
<dbReference type="CDD" id="cd16010">
    <property type="entry name" value="iPGM"/>
    <property type="match status" value="1"/>
</dbReference>
<dbReference type="FunFam" id="3.40.1450.10:FF:000002">
    <property type="entry name" value="2,3-bisphosphoglycerate-independent phosphoglycerate mutase"/>
    <property type="match status" value="1"/>
</dbReference>
<dbReference type="Gene3D" id="3.40.720.10">
    <property type="entry name" value="Alkaline Phosphatase, subunit A"/>
    <property type="match status" value="1"/>
</dbReference>
<dbReference type="Gene3D" id="3.40.1450.10">
    <property type="entry name" value="BPG-independent phosphoglycerate mutase, domain B"/>
    <property type="match status" value="1"/>
</dbReference>
<dbReference type="HAMAP" id="MF_01038">
    <property type="entry name" value="GpmI"/>
    <property type="match status" value="1"/>
</dbReference>
<dbReference type="InterPro" id="IPR017850">
    <property type="entry name" value="Alkaline_phosphatase_core_sf"/>
</dbReference>
<dbReference type="InterPro" id="IPR011258">
    <property type="entry name" value="BPG-indep_PGM_N"/>
</dbReference>
<dbReference type="InterPro" id="IPR006124">
    <property type="entry name" value="Metalloenzyme"/>
</dbReference>
<dbReference type="InterPro" id="IPR036646">
    <property type="entry name" value="PGAM_B_sf"/>
</dbReference>
<dbReference type="InterPro" id="IPR005995">
    <property type="entry name" value="Pgm_bpd_ind"/>
</dbReference>
<dbReference type="NCBIfam" id="TIGR01307">
    <property type="entry name" value="pgm_bpd_ind"/>
    <property type="match status" value="1"/>
</dbReference>
<dbReference type="PANTHER" id="PTHR31637">
    <property type="entry name" value="2,3-BISPHOSPHOGLYCERATE-INDEPENDENT PHOSPHOGLYCERATE MUTASE"/>
    <property type="match status" value="1"/>
</dbReference>
<dbReference type="PANTHER" id="PTHR31637:SF0">
    <property type="entry name" value="2,3-BISPHOSPHOGLYCERATE-INDEPENDENT PHOSPHOGLYCERATE MUTASE"/>
    <property type="match status" value="1"/>
</dbReference>
<dbReference type="Pfam" id="PF06415">
    <property type="entry name" value="iPGM_N"/>
    <property type="match status" value="1"/>
</dbReference>
<dbReference type="Pfam" id="PF01676">
    <property type="entry name" value="Metalloenzyme"/>
    <property type="match status" value="1"/>
</dbReference>
<dbReference type="PIRSF" id="PIRSF001492">
    <property type="entry name" value="IPGAM"/>
    <property type="match status" value="1"/>
</dbReference>
<dbReference type="SUPFAM" id="SSF64158">
    <property type="entry name" value="2,3-Bisphosphoglycerate-independent phosphoglycerate mutase, substrate-binding domain"/>
    <property type="match status" value="1"/>
</dbReference>
<dbReference type="SUPFAM" id="SSF53649">
    <property type="entry name" value="Alkaline phosphatase-like"/>
    <property type="match status" value="1"/>
</dbReference>
<name>GPMI_DINSH</name>
<comment type="function">
    <text evidence="1">Catalyzes the interconversion of 2-phosphoglycerate and 3-phosphoglycerate.</text>
</comment>
<comment type="catalytic activity">
    <reaction evidence="1">
        <text>(2R)-2-phosphoglycerate = (2R)-3-phosphoglycerate</text>
        <dbReference type="Rhea" id="RHEA:15901"/>
        <dbReference type="ChEBI" id="CHEBI:58272"/>
        <dbReference type="ChEBI" id="CHEBI:58289"/>
        <dbReference type="EC" id="5.4.2.12"/>
    </reaction>
</comment>
<comment type="cofactor">
    <cofactor evidence="1">
        <name>Mn(2+)</name>
        <dbReference type="ChEBI" id="CHEBI:29035"/>
    </cofactor>
    <text evidence="1">Binds 2 manganese ions per subunit.</text>
</comment>
<comment type="pathway">
    <text evidence="1">Carbohydrate degradation; glycolysis; pyruvate from D-glyceraldehyde 3-phosphate: step 3/5.</text>
</comment>
<comment type="subunit">
    <text evidence="1">Monomer.</text>
</comment>
<comment type="similarity">
    <text evidence="1">Belongs to the BPG-independent phosphoglycerate mutase family.</text>
</comment>
<feature type="chain" id="PRO_1000084303" description="2,3-bisphosphoglycerate-independent phosphoglycerate mutase">
    <location>
        <begin position="1"/>
        <end position="505"/>
    </location>
</feature>
<feature type="active site" description="Phosphoserine intermediate" evidence="1">
    <location>
        <position position="63"/>
    </location>
</feature>
<feature type="binding site" evidence="1">
    <location>
        <position position="13"/>
    </location>
    <ligand>
        <name>Mn(2+)</name>
        <dbReference type="ChEBI" id="CHEBI:29035"/>
        <label>2</label>
    </ligand>
</feature>
<feature type="binding site" evidence="1">
    <location>
        <position position="63"/>
    </location>
    <ligand>
        <name>Mn(2+)</name>
        <dbReference type="ChEBI" id="CHEBI:29035"/>
        <label>2</label>
    </ligand>
</feature>
<feature type="binding site" evidence="1">
    <location>
        <position position="124"/>
    </location>
    <ligand>
        <name>substrate</name>
    </ligand>
</feature>
<feature type="binding site" evidence="1">
    <location>
        <begin position="153"/>
        <end position="154"/>
    </location>
    <ligand>
        <name>substrate</name>
    </ligand>
</feature>
<feature type="binding site" evidence="1">
    <location>
        <position position="183"/>
    </location>
    <ligand>
        <name>substrate</name>
    </ligand>
</feature>
<feature type="binding site" evidence="1">
    <location>
        <position position="189"/>
    </location>
    <ligand>
        <name>substrate</name>
    </ligand>
</feature>
<feature type="binding site" evidence="1">
    <location>
        <begin position="254"/>
        <end position="257"/>
    </location>
    <ligand>
        <name>substrate</name>
    </ligand>
</feature>
<feature type="binding site" evidence="1">
    <location>
        <position position="330"/>
    </location>
    <ligand>
        <name>substrate</name>
    </ligand>
</feature>
<feature type="binding site" evidence="1">
    <location>
        <position position="396"/>
    </location>
    <ligand>
        <name>Mn(2+)</name>
        <dbReference type="ChEBI" id="CHEBI:29035"/>
        <label>1</label>
    </ligand>
</feature>
<feature type="binding site" evidence="1">
    <location>
        <position position="400"/>
    </location>
    <ligand>
        <name>Mn(2+)</name>
        <dbReference type="ChEBI" id="CHEBI:29035"/>
        <label>1</label>
    </ligand>
</feature>
<feature type="binding site" evidence="1">
    <location>
        <position position="437"/>
    </location>
    <ligand>
        <name>Mn(2+)</name>
        <dbReference type="ChEBI" id="CHEBI:29035"/>
        <label>2</label>
    </ligand>
</feature>
<feature type="binding site" evidence="1">
    <location>
        <position position="438"/>
    </location>
    <ligand>
        <name>Mn(2+)</name>
        <dbReference type="ChEBI" id="CHEBI:29035"/>
        <label>2</label>
    </ligand>
</feature>
<feature type="binding site" evidence="1">
    <location>
        <position position="456"/>
    </location>
    <ligand>
        <name>Mn(2+)</name>
        <dbReference type="ChEBI" id="CHEBI:29035"/>
        <label>1</label>
    </ligand>
</feature>
<gene>
    <name evidence="1" type="primary">gpmI</name>
    <name type="ordered locus">Dshi_0089</name>
</gene>
<protein>
    <recommendedName>
        <fullName evidence="1">2,3-bisphosphoglycerate-independent phosphoglycerate mutase</fullName>
        <shortName evidence="1">BPG-independent PGAM</shortName>
        <shortName evidence="1">Phosphoglyceromutase</shortName>
        <shortName evidence="1">iPGM</shortName>
        <ecNumber evidence="1">5.4.2.12</ecNumber>
    </recommendedName>
</protein>
<sequence length="505" mass="53047">MTAPKPVVLCILDGWGLDPDGPANAPLLADTPVMDRLMATCPNATLTTFGPDVGLPSGQMGNSEVGHTNIGAGRVVAMDLGQIDLAIEDGSFARNPALTGFIDRLKSSGGTAHLMGVASDGGVHGHTDHIIAAAKAVAGAGVPVVLHAITDGRDVAPKSADRFMPALEAALPEGARIGTVIGRYYAMDRDNRWDRVARAFVAMVRAQGETAESAQAAVAAAYGRGETDEFIAPTVIGGYAGMRDGDGIFCLNFRADRAREILRAMAQPDFDAFDPAGLPDFAAKLGMVSYSDEHDGWFDIVFPKREIVNTLGAWVAKQGLRQFRLAETEKYPHVTFFLNGGQETPETGEDRFMPDSPKVATYDLQPEMSAEEVSDSFVAAIEAGYDLIVVNYANPDMVGHTGDLEAAKAACTAVDTGLGRALAALEVAGGAMIVTADHGNCETMIDPETGGTHTAHTLNPVPVILVGGPEGATLAPGRLADLAPTILHLMHLPQPVEMTGRSLIR</sequence>
<accession>A8LKJ5</accession>